<comment type="function">
    <text evidence="1">Pectinolytic enzymes consist of four classes of enzymes: pectin lyase, polygalacturonase, pectin methylesterase and rhamnogalacturonase. Degrades the rhamnogalacturonan I (RG-I) backbone of pectin (By similarity).</text>
</comment>
<comment type="catalytic activity">
    <reaction>
        <text>Endotype eliminative cleavage of L-alpha-rhamnopyranosyl-(1-&gt;4)-alpha-D-galactopyranosyluronic acid bonds of rhamnogalacturonan I domains in ramified hairy regions of pectin leaving L-rhamnopyranose at the reducing end and 4-deoxy-4,5-unsaturated D-galactopyranosyluronic acid at the non-reducing end.</text>
        <dbReference type="EC" id="4.2.2.23"/>
    </reaction>
</comment>
<comment type="subcellular location">
    <subcellularLocation>
        <location evidence="1">Secreted</location>
    </subcellularLocation>
</comment>
<comment type="similarity">
    <text evidence="3">Belongs to the polysaccharide lyase 4 family.</text>
</comment>
<feature type="signal peptide" evidence="2">
    <location>
        <begin position="1"/>
        <end position="20"/>
    </location>
</feature>
<feature type="chain" id="PRO_0000394366" description="Probable rhamnogalacturonate lyase A">
    <location>
        <begin position="21"/>
        <end position="528"/>
    </location>
</feature>
<feature type="disulfide bond" evidence="1">
    <location>
        <begin position="50"/>
        <end position="93"/>
    </location>
</feature>
<feature type="disulfide bond" evidence="1">
    <location>
        <begin position="184"/>
        <end position="193"/>
    </location>
</feature>
<organism>
    <name type="scientific">Aspergillus flavus (strain ATCC 200026 / FGSC A1120 / IAM 13836 / NRRL 3357 / JCM 12722 / SRRC 167)</name>
    <dbReference type="NCBI Taxonomy" id="332952"/>
    <lineage>
        <taxon>Eukaryota</taxon>
        <taxon>Fungi</taxon>
        <taxon>Dikarya</taxon>
        <taxon>Ascomycota</taxon>
        <taxon>Pezizomycotina</taxon>
        <taxon>Eurotiomycetes</taxon>
        <taxon>Eurotiomycetidae</taxon>
        <taxon>Eurotiales</taxon>
        <taxon>Aspergillaceae</taxon>
        <taxon>Aspergillus</taxon>
        <taxon>Aspergillus subgen. Circumdati</taxon>
    </lineage>
</organism>
<name>RGLA_ASPFN</name>
<sequence>MLSRTILFSTSFLWVRVANAAFGITTSDDSYVIDAGSANSLKFTVSRSSCDITSINYYGSELQYSGTGSHIGSGLGSADVSAVEDGDYIKVTCDTDTLTQYFVVHNGDSVIHMATYTTEEPSVGELRFIARLNSELLPNEEPFGDVSTTSGGEAIEGSDVFLVDGETRSKFYSSQRFIDDQRHCVAGDAHRVCMILNQYETSSGGPFFRDINSNNGGSYNSLYWYMNSGHVQTEDRRQGLHGPYSMYFSRSGTPSTDIDTSFFANLDIKGYVAADGRGTVSGTASGADSSFKWVVHWYNADAQYWTYTSSDGSFTSPAMKPGDYTMVYYQGEYKVAETSVSVTAGSSTSKDISGFVETGDTIFKIGDWDGTPTGFRNAENQLRMHPSDSRMSSWGPLTYTVGSSELTDFPMAAFKGVNDPVTIKFTATSAQTGAATLRIGTTLSFAGGRPQATINDYEGSAPSAPTNLNSRGVTRGAYRGLGEVYDVNIPSGTIVEGENTITISVISGSSGDEFLAPNFIFDCVELFQ</sequence>
<proteinExistence type="inferred from homology"/>
<protein>
    <recommendedName>
        <fullName>Probable rhamnogalacturonate lyase A</fullName>
        <ecNumber>4.2.2.23</ecNumber>
    </recommendedName>
</protein>
<accession>B8NCU7</accession>
<dbReference type="EC" id="4.2.2.23"/>
<dbReference type="EMBL" id="EQ963476">
    <property type="protein sequence ID" value="EED52480.1"/>
    <property type="molecule type" value="Genomic_DNA"/>
</dbReference>
<dbReference type="RefSeq" id="XP_002377644.1">
    <property type="nucleotide sequence ID" value="XM_002377603.1"/>
</dbReference>
<dbReference type="SMR" id="B8NCU7"/>
<dbReference type="STRING" id="332952.B8NCU7"/>
<dbReference type="EnsemblFungi" id="EED52480">
    <property type="protein sequence ID" value="EED52480"/>
    <property type="gene ID" value="AFLA_041820"/>
</dbReference>
<dbReference type="VEuPathDB" id="FungiDB:AFLA_007746"/>
<dbReference type="eggNOG" id="ENOG502QTKY">
    <property type="taxonomic scope" value="Eukaryota"/>
</dbReference>
<dbReference type="HOGENOM" id="CLU_037882_1_1_1"/>
<dbReference type="OMA" id="FKIGDWD"/>
<dbReference type="GO" id="GO:0005576">
    <property type="term" value="C:extracellular region"/>
    <property type="evidence" value="ECO:0007669"/>
    <property type="project" value="UniProtKB-SubCell"/>
</dbReference>
<dbReference type="GO" id="GO:0030246">
    <property type="term" value="F:carbohydrate binding"/>
    <property type="evidence" value="ECO:0007669"/>
    <property type="project" value="InterPro"/>
</dbReference>
<dbReference type="GO" id="GO:0102210">
    <property type="term" value="F:rhamnogalacturonan endolyase activity"/>
    <property type="evidence" value="ECO:0007669"/>
    <property type="project" value="UniProtKB-EC"/>
</dbReference>
<dbReference type="GO" id="GO:0071555">
    <property type="term" value="P:cell wall organization"/>
    <property type="evidence" value="ECO:0007669"/>
    <property type="project" value="UniProtKB-KW"/>
</dbReference>
<dbReference type="GO" id="GO:0045490">
    <property type="term" value="P:pectin catabolic process"/>
    <property type="evidence" value="ECO:0007669"/>
    <property type="project" value="TreeGrafter"/>
</dbReference>
<dbReference type="CDD" id="cd10317">
    <property type="entry name" value="RGL4_C"/>
    <property type="match status" value="1"/>
</dbReference>
<dbReference type="CDD" id="cd10316">
    <property type="entry name" value="RGL4_M"/>
    <property type="match status" value="1"/>
</dbReference>
<dbReference type="CDD" id="cd10320">
    <property type="entry name" value="RGL4_N"/>
    <property type="match status" value="1"/>
</dbReference>
<dbReference type="FunFam" id="2.60.120.260:FF:000102">
    <property type="entry name" value="Rhamnogalacturonate lyase A"/>
    <property type="match status" value="1"/>
</dbReference>
<dbReference type="FunFam" id="2.60.40.1120:FF:000017">
    <property type="entry name" value="Rhamnogalacturonate lyase A"/>
    <property type="match status" value="1"/>
</dbReference>
<dbReference type="FunFam" id="2.70.98.10:FF:000020">
    <property type="entry name" value="Rhamnogalacturonate lyase A"/>
    <property type="match status" value="1"/>
</dbReference>
<dbReference type="Gene3D" id="2.70.98.10">
    <property type="match status" value="1"/>
</dbReference>
<dbReference type="Gene3D" id="2.60.40.1120">
    <property type="entry name" value="Carboxypeptidase-like, regulatory domain"/>
    <property type="match status" value="1"/>
</dbReference>
<dbReference type="Gene3D" id="2.60.120.260">
    <property type="entry name" value="Galactose-binding domain-like"/>
    <property type="match status" value="1"/>
</dbReference>
<dbReference type="InterPro" id="IPR013784">
    <property type="entry name" value="Carb-bd-like_fold"/>
</dbReference>
<dbReference type="InterPro" id="IPR011013">
    <property type="entry name" value="Gal_mutarotase_sf_dom"/>
</dbReference>
<dbReference type="InterPro" id="IPR008979">
    <property type="entry name" value="Galactose-bd-like_sf"/>
</dbReference>
<dbReference type="InterPro" id="IPR014718">
    <property type="entry name" value="GH-type_carb-bd"/>
</dbReference>
<dbReference type="InterPro" id="IPR029413">
    <property type="entry name" value="RG-lyase_II"/>
</dbReference>
<dbReference type="InterPro" id="IPR029411">
    <property type="entry name" value="RG-lyase_III"/>
</dbReference>
<dbReference type="InterPro" id="IPR016590">
    <property type="entry name" value="Rhamnogalacturonase_B"/>
</dbReference>
<dbReference type="InterPro" id="IPR015364">
    <property type="entry name" value="RhgB_N"/>
</dbReference>
<dbReference type="PANTHER" id="PTHR36574">
    <property type="entry name" value="RHAMNOGALACTURONATE LYASE-RELATED"/>
    <property type="match status" value="1"/>
</dbReference>
<dbReference type="PANTHER" id="PTHR36574:SF1">
    <property type="entry name" value="RHAMNOGALACTURONATE LYASE-RELATED"/>
    <property type="match status" value="1"/>
</dbReference>
<dbReference type="Pfam" id="PF14683">
    <property type="entry name" value="CBM-like"/>
    <property type="match status" value="1"/>
</dbReference>
<dbReference type="Pfam" id="PF14686">
    <property type="entry name" value="fn3_3"/>
    <property type="match status" value="1"/>
</dbReference>
<dbReference type="Pfam" id="PF09284">
    <property type="entry name" value="RhgB_N"/>
    <property type="match status" value="1"/>
</dbReference>
<dbReference type="PIRSF" id="PIRSF011794">
    <property type="entry name" value="Rhamnogalacturonase_B"/>
    <property type="match status" value="1"/>
</dbReference>
<dbReference type="SUPFAM" id="SSF74650">
    <property type="entry name" value="Galactose mutarotase-like"/>
    <property type="match status" value="1"/>
</dbReference>
<dbReference type="SUPFAM" id="SSF49785">
    <property type="entry name" value="Galactose-binding domain-like"/>
    <property type="match status" value="1"/>
</dbReference>
<dbReference type="SUPFAM" id="SSF49452">
    <property type="entry name" value="Starch-binding domain-like"/>
    <property type="match status" value="1"/>
</dbReference>
<evidence type="ECO:0000250" key="1"/>
<evidence type="ECO:0000255" key="2"/>
<evidence type="ECO:0000305" key="3"/>
<keyword id="KW-0119">Carbohydrate metabolism</keyword>
<keyword id="KW-0961">Cell wall biogenesis/degradation</keyword>
<keyword id="KW-1015">Disulfide bond</keyword>
<keyword id="KW-0456">Lyase</keyword>
<keyword id="KW-0624">Polysaccharide degradation</keyword>
<keyword id="KW-0964">Secreted</keyword>
<keyword id="KW-0732">Signal</keyword>
<gene>
    <name type="primary">rglA</name>
    <name type="ORF">AFLA_041820</name>
</gene>
<reference key="1">
    <citation type="journal article" date="2015" name="Genome Announc.">
        <title>Genome sequence of Aspergillus flavus NRRL 3357, a strain that causes aflatoxin contamination of food and feed.</title>
        <authorList>
            <person name="Nierman W.C."/>
            <person name="Yu J."/>
            <person name="Fedorova-Abrams N.D."/>
            <person name="Losada L."/>
            <person name="Cleveland T.E."/>
            <person name="Bhatnagar D."/>
            <person name="Bennett J.W."/>
            <person name="Dean R."/>
            <person name="Payne G.A."/>
        </authorList>
    </citation>
    <scope>NUCLEOTIDE SEQUENCE [LARGE SCALE GENOMIC DNA]</scope>
    <source>
        <strain>ATCC 200026 / FGSC A1120 / IAM 13836 / NRRL 3357 / JCM 12722 / SRRC 167</strain>
    </source>
</reference>